<reference key="1">
    <citation type="submission" date="2009-01" db="EMBL/GenBank/DDBJ databases">
        <title>Complete sequence of Anaeromyxobacter dehalogenans 2CP-1.</title>
        <authorList>
            <person name="Lucas S."/>
            <person name="Copeland A."/>
            <person name="Lapidus A."/>
            <person name="Glavina del Rio T."/>
            <person name="Dalin E."/>
            <person name="Tice H."/>
            <person name="Bruce D."/>
            <person name="Goodwin L."/>
            <person name="Pitluck S."/>
            <person name="Saunders E."/>
            <person name="Brettin T."/>
            <person name="Detter J.C."/>
            <person name="Han C."/>
            <person name="Larimer F."/>
            <person name="Land M."/>
            <person name="Hauser L."/>
            <person name="Kyrpides N."/>
            <person name="Ovchinnikova G."/>
            <person name="Beliaev A.S."/>
            <person name="Richardson P."/>
        </authorList>
    </citation>
    <scope>NUCLEOTIDE SEQUENCE [LARGE SCALE GENOMIC DNA]</scope>
    <source>
        <strain>2CP-1 / ATCC BAA-258</strain>
    </source>
</reference>
<name>RL6_ANAD2</name>
<gene>
    <name evidence="1" type="primary">rplF</name>
    <name type="ordered locus">A2cp1_2033</name>
</gene>
<keyword id="KW-0687">Ribonucleoprotein</keyword>
<keyword id="KW-0689">Ribosomal protein</keyword>
<keyword id="KW-0694">RNA-binding</keyword>
<keyword id="KW-0699">rRNA-binding</keyword>
<dbReference type="EMBL" id="CP001359">
    <property type="protein sequence ID" value="ACL65374.1"/>
    <property type="molecule type" value="Genomic_DNA"/>
</dbReference>
<dbReference type="RefSeq" id="WP_012633250.1">
    <property type="nucleotide sequence ID" value="NC_011891.1"/>
</dbReference>
<dbReference type="SMR" id="B8J875"/>
<dbReference type="KEGG" id="acp:A2cp1_2033"/>
<dbReference type="HOGENOM" id="CLU_065464_1_2_7"/>
<dbReference type="Proteomes" id="UP000007089">
    <property type="component" value="Chromosome"/>
</dbReference>
<dbReference type="GO" id="GO:0022625">
    <property type="term" value="C:cytosolic large ribosomal subunit"/>
    <property type="evidence" value="ECO:0007669"/>
    <property type="project" value="TreeGrafter"/>
</dbReference>
<dbReference type="GO" id="GO:0019843">
    <property type="term" value="F:rRNA binding"/>
    <property type="evidence" value="ECO:0007669"/>
    <property type="project" value="UniProtKB-UniRule"/>
</dbReference>
<dbReference type="GO" id="GO:0003735">
    <property type="term" value="F:structural constituent of ribosome"/>
    <property type="evidence" value="ECO:0007669"/>
    <property type="project" value="InterPro"/>
</dbReference>
<dbReference type="GO" id="GO:0002181">
    <property type="term" value="P:cytoplasmic translation"/>
    <property type="evidence" value="ECO:0007669"/>
    <property type="project" value="TreeGrafter"/>
</dbReference>
<dbReference type="FunFam" id="3.90.930.12:FF:000001">
    <property type="entry name" value="50S ribosomal protein L6"/>
    <property type="match status" value="1"/>
</dbReference>
<dbReference type="FunFam" id="3.90.930.12:FF:000002">
    <property type="entry name" value="50S ribosomal protein L6"/>
    <property type="match status" value="1"/>
</dbReference>
<dbReference type="Gene3D" id="3.90.930.12">
    <property type="entry name" value="Ribosomal protein L6, alpha-beta domain"/>
    <property type="match status" value="2"/>
</dbReference>
<dbReference type="HAMAP" id="MF_01365_B">
    <property type="entry name" value="Ribosomal_uL6_B"/>
    <property type="match status" value="1"/>
</dbReference>
<dbReference type="InterPro" id="IPR000702">
    <property type="entry name" value="Ribosomal_uL6-like"/>
</dbReference>
<dbReference type="InterPro" id="IPR036789">
    <property type="entry name" value="Ribosomal_uL6-like_a/b-dom_sf"/>
</dbReference>
<dbReference type="InterPro" id="IPR020040">
    <property type="entry name" value="Ribosomal_uL6_a/b-dom"/>
</dbReference>
<dbReference type="InterPro" id="IPR019906">
    <property type="entry name" value="Ribosomal_uL6_bac-type"/>
</dbReference>
<dbReference type="InterPro" id="IPR002358">
    <property type="entry name" value="Ribosomal_uL6_CS"/>
</dbReference>
<dbReference type="NCBIfam" id="TIGR03654">
    <property type="entry name" value="L6_bact"/>
    <property type="match status" value="1"/>
</dbReference>
<dbReference type="PANTHER" id="PTHR11655">
    <property type="entry name" value="60S/50S RIBOSOMAL PROTEIN L6/L9"/>
    <property type="match status" value="1"/>
</dbReference>
<dbReference type="PANTHER" id="PTHR11655:SF14">
    <property type="entry name" value="LARGE RIBOSOMAL SUBUNIT PROTEIN UL6M"/>
    <property type="match status" value="1"/>
</dbReference>
<dbReference type="Pfam" id="PF00347">
    <property type="entry name" value="Ribosomal_L6"/>
    <property type="match status" value="2"/>
</dbReference>
<dbReference type="PIRSF" id="PIRSF002162">
    <property type="entry name" value="Ribosomal_L6"/>
    <property type="match status" value="1"/>
</dbReference>
<dbReference type="PRINTS" id="PR00059">
    <property type="entry name" value="RIBOSOMALL6"/>
</dbReference>
<dbReference type="SUPFAM" id="SSF56053">
    <property type="entry name" value="Ribosomal protein L6"/>
    <property type="match status" value="2"/>
</dbReference>
<dbReference type="PROSITE" id="PS00525">
    <property type="entry name" value="RIBOSOMAL_L6_1"/>
    <property type="match status" value="1"/>
</dbReference>
<organism>
    <name type="scientific">Anaeromyxobacter dehalogenans (strain 2CP-1 / ATCC BAA-258)</name>
    <dbReference type="NCBI Taxonomy" id="455488"/>
    <lineage>
        <taxon>Bacteria</taxon>
        <taxon>Pseudomonadati</taxon>
        <taxon>Myxococcota</taxon>
        <taxon>Myxococcia</taxon>
        <taxon>Myxococcales</taxon>
        <taxon>Cystobacterineae</taxon>
        <taxon>Anaeromyxobacteraceae</taxon>
        <taxon>Anaeromyxobacter</taxon>
    </lineage>
</organism>
<feature type="chain" id="PRO_1000166787" description="Large ribosomal subunit protein uL6">
    <location>
        <begin position="1"/>
        <end position="180"/>
    </location>
</feature>
<protein>
    <recommendedName>
        <fullName evidence="1">Large ribosomal subunit protein uL6</fullName>
    </recommendedName>
    <alternativeName>
        <fullName evidence="2">50S ribosomal protein L6</fullName>
    </alternativeName>
</protein>
<proteinExistence type="inferred from homology"/>
<evidence type="ECO:0000255" key="1">
    <source>
        <dbReference type="HAMAP-Rule" id="MF_01365"/>
    </source>
</evidence>
<evidence type="ECO:0000305" key="2"/>
<accession>B8J875</accession>
<comment type="function">
    <text evidence="1">This protein binds to the 23S rRNA, and is important in its secondary structure. It is located near the subunit interface in the base of the L7/L12 stalk, and near the tRNA binding site of the peptidyltransferase center.</text>
</comment>
<comment type="subunit">
    <text evidence="1">Part of the 50S ribosomal subunit.</text>
</comment>
<comment type="similarity">
    <text evidence="1">Belongs to the universal ribosomal protein uL6 family.</text>
</comment>
<sequence>MSRVGKLPVKIPEKVKVSVDGNVVKVEGPKGKMHFPTNPLVSVQVDKGEVKVARQDESHVAKGLHGLTRTLVKNALEGVVKGYEKGLEINGVGFKAEVKGKEIHFTLGFSHPVVFKLPDGVTAEVDAKQTKLTIRSVDKHLLGLTAAKVRALRPPEPYKGKGIKYADETIRRKEGKTGAA</sequence>